<protein>
    <recommendedName>
        <fullName evidence="1">Tryptophan synthase alpha chain</fullName>
        <ecNumber evidence="1">4.2.1.20</ecNumber>
    </recommendedName>
</protein>
<organism>
    <name type="scientific">Burkholderia cenocepacia (strain ATCC BAA-245 / DSM 16553 / LMG 16656 / NCTC 13227 / J2315 / CF5610)</name>
    <name type="common">Burkholderia cepacia (strain J2315)</name>
    <dbReference type="NCBI Taxonomy" id="216591"/>
    <lineage>
        <taxon>Bacteria</taxon>
        <taxon>Pseudomonadati</taxon>
        <taxon>Pseudomonadota</taxon>
        <taxon>Betaproteobacteria</taxon>
        <taxon>Burkholderiales</taxon>
        <taxon>Burkholderiaceae</taxon>
        <taxon>Burkholderia</taxon>
        <taxon>Burkholderia cepacia complex</taxon>
    </lineage>
</organism>
<comment type="function">
    <text evidence="1">The alpha subunit is responsible for the aldol cleavage of indoleglycerol phosphate to indole and glyceraldehyde 3-phosphate.</text>
</comment>
<comment type="catalytic activity">
    <reaction evidence="1">
        <text>(1S,2R)-1-C-(indol-3-yl)glycerol 3-phosphate + L-serine = D-glyceraldehyde 3-phosphate + L-tryptophan + H2O</text>
        <dbReference type="Rhea" id="RHEA:10532"/>
        <dbReference type="ChEBI" id="CHEBI:15377"/>
        <dbReference type="ChEBI" id="CHEBI:33384"/>
        <dbReference type="ChEBI" id="CHEBI:57912"/>
        <dbReference type="ChEBI" id="CHEBI:58866"/>
        <dbReference type="ChEBI" id="CHEBI:59776"/>
        <dbReference type="EC" id="4.2.1.20"/>
    </reaction>
</comment>
<comment type="pathway">
    <text evidence="1">Amino-acid biosynthesis; L-tryptophan biosynthesis; L-tryptophan from chorismate: step 5/5.</text>
</comment>
<comment type="subunit">
    <text evidence="1">Tetramer of two alpha and two beta chains.</text>
</comment>
<comment type="similarity">
    <text evidence="1">Belongs to the TrpA family.</text>
</comment>
<accession>B4EFK2</accession>
<proteinExistence type="inferred from homology"/>
<keyword id="KW-0028">Amino-acid biosynthesis</keyword>
<keyword id="KW-0057">Aromatic amino acid biosynthesis</keyword>
<keyword id="KW-0456">Lyase</keyword>
<keyword id="KW-0822">Tryptophan biosynthesis</keyword>
<gene>
    <name evidence="1" type="primary">trpA</name>
    <name type="ordered locus">BceJ2315_44490</name>
    <name type="ORF">BCAM0993</name>
</gene>
<evidence type="ECO:0000255" key="1">
    <source>
        <dbReference type="HAMAP-Rule" id="MF_00131"/>
    </source>
</evidence>
<dbReference type="EC" id="4.2.1.20" evidence="1"/>
<dbReference type="EMBL" id="AM747721">
    <property type="protein sequence ID" value="CAR54851.1"/>
    <property type="molecule type" value="Genomic_DNA"/>
</dbReference>
<dbReference type="RefSeq" id="WP_006484407.1">
    <property type="nucleotide sequence ID" value="NC_011001.1"/>
</dbReference>
<dbReference type="SMR" id="B4EFK2"/>
<dbReference type="KEGG" id="bcj:BCAM0993"/>
<dbReference type="eggNOG" id="COG0159">
    <property type="taxonomic scope" value="Bacteria"/>
</dbReference>
<dbReference type="HOGENOM" id="CLU_016734_0_0_4"/>
<dbReference type="BioCyc" id="BCEN216591:G1G1V-4986-MONOMER"/>
<dbReference type="UniPathway" id="UPA00035">
    <property type="reaction ID" value="UER00044"/>
</dbReference>
<dbReference type="Proteomes" id="UP000001035">
    <property type="component" value="Chromosome 2"/>
</dbReference>
<dbReference type="GO" id="GO:0005829">
    <property type="term" value="C:cytosol"/>
    <property type="evidence" value="ECO:0007669"/>
    <property type="project" value="TreeGrafter"/>
</dbReference>
<dbReference type="GO" id="GO:0004834">
    <property type="term" value="F:tryptophan synthase activity"/>
    <property type="evidence" value="ECO:0007669"/>
    <property type="project" value="UniProtKB-UniRule"/>
</dbReference>
<dbReference type="CDD" id="cd04724">
    <property type="entry name" value="Tryptophan_synthase_alpha"/>
    <property type="match status" value="1"/>
</dbReference>
<dbReference type="FunFam" id="3.20.20.70:FF:000037">
    <property type="entry name" value="Tryptophan synthase alpha chain"/>
    <property type="match status" value="1"/>
</dbReference>
<dbReference type="Gene3D" id="3.20.20.70">
    <property type="entry name" value="Aldolase class I"/>
    <property type="match status" value="1"/>
</dbReference>
<dbReference type="HAMAP" id="MF_00131">
    <property type="entry name" value="Trp_synth_alpha"/>
    <property type="match status" value="1"/>
</dbReference>
<dbReference type="InterPro" id="IPR013785">
    <property type="entry name" value="Aldolase_TIM"/>
</dbReference>
<dbReference type="InterPro" id="IPR011060">
    <property type="entry name" value="RibuloseP-bd_barrel"/>
</dbReference>
<dbReference type="InterPro" id="IPR018204">
    <property type="entry name" value="Trp_synthase_alpha_AS"/>
</dbReference>
<dbReference type="InterPro" id="IPR002028">
    <property type="entry name" value="Trp_synthase_suA"/>
</dbReference>
<dbReference type="NCBIfam" id="TIGR00262">
    <property type="entry name" value="trpA"/>
    <property type="match status" value="1"/>
</dbReference>
<dbReference type="PANTHER" id="PTHR43406:SF1">
    <property type="entry name" value="TRYPTOPHAN SYNTHASE ALPHA CHAIN, CHLOROPLASTIC"/>
    <property type="match status" value="1"/>
</dbReference>
<dbReference type="PANTHER" id="PTHR43406">
    <property type="entry name" value="TRYPTOPHAN SYNTHASE, ALPHA CHAIN"/>
    <property type="match status" value="1"/>
</dbReference>
<dbReference type="Pfam" id="PF00290">
    <property type="entry name" value="Trp_syntA"/>
    <property type="match status" value="1"/>
</dbReference>
<dbReference type="SUPFAM" id="SSF51366">
    <property type="entry name" value="Ribulose-phoshate binding barrel"/>
    <property type="match status" value="1"/>
</dbReference>
<dbReference type="PROSITE" id="PS00167">
    <property type="entry name" value="TRP_SYNTHASE_ALPHA"/>
    <property type="match status" value="1"/>
</dbReference>
<name>TRPA_BURCJ</name>
<feature type="chain" id="PRO_1000095698" description="Tryptophan synthase alpha chain">
    <location>
        <begin position="1"/>
        <end position="271"/>
    </location>
</feature>
<feature type="active site" description="Proton acceptor" evidence="1">
    <location>
        <position position="49"/>
    </location>
</feature>
<feature type="active site" description="Proton acceptor" evidence="1">
    <location>
        <position position="60"/>
    </location>
</feature>
<sequence>MSRIQQTFAALAEQGRKGLIPFITAGDPDPAKTVEFMHALAAGGADVIELGVPFSDPMADGPVIQRSSERALARGVTLKSVLADVKRFRETDPKTPVVLMGYANPIERMGVDAFAAEAHAAGVDGVLVVDYPPEEAGVFAEKMRAAQIDPIFLLAPTSTDERIADVGKIASGYVYYVSLKGVTGAGNLDVSSIAGKIPAIKSRVPVPVGVGFGIRDAETARAVAEVSDAVVIGSRLVQLLESAAPEGAAAALKTFIAELRAALDGAGKTAR</sequence>
<reference key="1">
    <citation type="journal article" date="2009" name="J. Bacteriol.">
        <title>The genome of Burkholderia cenocepacia J2315, an epidemic pathogen of cystic fibrosis patients.</title>
        <authorList>
            <person name="Holden M.T."/>
            <person name="Seth-Smith H.M."/>
            <person name="Crossman L.C."/>
            <person name="Sebaihia M."/>
            <person name="Bentley S.D."/>
            <person name="Cerdeno-Tarraga A.M."/>
            <person name="Thomson N.R."/>
            <person name="Bason N."/>
            <person name="Quail M.A."/>
            <person name="Sharp S."/>
            <person name="Cherevach I."/>
            <person name="Churcher C."/>
            <person name="Goodhead I."/>
            <person name="Hauser H."/>
            <person name="Holroyd N."/>
            <person name="Mungall K."/>
            <person name="Scott P."/>
            <person name="Walker D."/>
            <person name="White B."/>
            <person name="Rose H."/>
            <person name="Iversen P."/>
            <person name="Mil-Homens D."/>
            <person name="Rocha E.P."/>
            <person name="Fialho A.M."/>
            <person name="Baldwin A."/>
            <person name="Dowson C."/>
            <person name="Barrell B.G."/>
            <person name="Govan J.R."/>
            <person name="Vandamme P."/>
            <person name="Hart C.A."/>
            <person name="Mahenthiralingam E."/>
            <person name="Parkhill J."/>
        </authorList>
    </citation>
    <scope>NUCLEOTIDE SEQUENCE [LARGE SCALE GENOMIC DNA]</scope>
    <source>
        <strain>ATCC BAA-245 / DSM 16553 / LMG 16656 / NCTC 13227 / J2315 / CF5610</strain>
    </source>
</reference>